<geneLocation type="chloroplast"/>
<gene>
    <name type="primary">apcE</name>
</gene>
<keyword id="KW-0042">Antenna complex</keyword>
<keyword id="KW-0089">Bile pigment</keyword>
<keyword id="KW-0150">Chloroplast</keyword>
<keyword id="KW-0157">Chromophore</keyword>
<keyword id="KW-0249">Electron transport</keyword>
<keyword id="KW-0456">Lyase</keyword>
<keyword id="KW-0472">Membrane</keyword>
<keyword id="KW-0602">Photosynthesis</keyword>
<keyword id="KW-0605">Phycobilisome</keyword>
<keyword id="KW-0934">Plastid</keyword>
<keyword id="KW-0677">Repeat</keyword>
<keyword id="KW-0793">Thylakoid</keyword>
<keyword id="KW-0813">Transport</keyword>
<name>APCE_PORPU</name>
<reference key="1">
    <citation type="journal article" date="1995" name="Plant Mol. Biol. Rep.">
        <title>Complete nucleotide sequence of the Porphyra purpurea chloroplast genome.</title>
        <authorList>
            <person name="Reith M.E."/>
            <person name="Munholland J."/>
        </authorList>
    </citation>
    <scope>NUCLEOTIDE SEQUENCE [LARGE SCALE GENOMIC DNA]</scope>
    <source>
        <strain>Avonport</strain>
    </source>
</reference>
<dbReference type="EC" id="4.-.-.-"/>
<dbReference type="EMBL" id="U38804">
    <property type="protein sequence ID" value="AAC08149.1"/>
    <property type="molecule type" value="Genomic_DNA"/>
</dbReference>
<dbReference type="PIR" id="S73184">
    <property type="entry name" value="S73184"/>
</dbReference>
<dbReference type="RefSeq" id="NP_053873.1">
    <property type="nucleotide sequence ID" value="NC_000925.1"/>
</dbReference>
<dbReference type="SMR" id="P51263"/>
<dbReference type="GeneID" id="809892"/>
<dbReference type="GO" id="GO:0009535">
    <property type="term" value="C:chloroplast thylakoid membrane"/>
    <property type="evidence" value="ECO:0007669"/>
    <property type="project" value="UniProtKB-SubCell"/>
</dbReference>
<dbReference type="GO" id="GO:0030089">
    <property type="term" value="C:phycobilisome"/>
    <property type="evidence" value="ECO:0007669"/>
    <property type="project" value="UniProtKB-KW"/>
</dbReference>
<dbReference type="GO" id="GO:0016829">
    <property type="term" value="F:lyase activity"/>
    <property type="evidence" value="ECO:0007669"/>
    <property type="project" value="UniProtKB-KW"/>
</dbReference>
<dbReference type="GO" id="GO:0015979">
    <property type="term" value="P:photosynthesis"/>
    <property type="evidence" value="ECO:0007669"/>
    <property type="project" value="UniProtKB-KW"/>
</dbReference>
<dbReference type="CDD" id="cd12128">
    <property type="entry name" value="PBP_PBS-LCM"/>
    <property type="match status" value="1"/>
</dbReference>
<dbReference type="Gene3D" id="1.10.3130.20">
    <property type="entry name" value="Phycobilisome linker domain"/>
    <property type="match status" value="3"/>
</dbReference>
<dbReference type="Gene3D" id="1.10.490.20">
    <property type="entry name" value="Phycocyanins"/>
    <property type="match status" value="1"/>
</dbReference>
<dbReference type="InterPro" id="IPR009050">
    <property type="entry name" value="Globin-like_sf"/>
</dbReference>
<dbReference type="InterPro" id="IPR001297">
    <property type="entry name" value="PBS_linker_dom"/>
</dbReference>
<dbReference type="InterPro" id="IPR038255">
    <property type="entry name" value="PBS_linker_sf"/>
</dbReference>
<dbReference type="InterPro" id="IPR012128">
    <property type="entry name" value="Phycobilisome_asu/bsu"/>
</dbReference>
<dbReference type="InterPro" id="IPR038719">
    <property type="entry name" value="Phycobilisome_asu/bsu_sf"/>
</dbReference>
<dbReference type="PANTHER" id="PTHR34011:SF6">
    <property type="entry name" value="PHYCOBILIPROTEIN APCE"/>
    <property type="match status" value="1"/>
</dbReference>
<dbReference type="PANTHER" id="PTHR34011">
    <property type="entry name" value="PHYCOBILISOME 32.1 KDA LINKER POLYPEPTIDE, PHYCOCYANIN-ASSOCIATED, ROD 2-RELATED"/>
    <property type="match status" value="1"/>
</dbReference>
<dbReference type="Pfam" id="PF00427">
    <property type="entry name" value="PBS_linker_poly"/>
    <property type="match status" value="3"/>
</dbReference>
<dbReference type="Pfam" id="PF00502">
    <property type="entry name" value="Phycobilisome"/>
    <property type="match status" value="2"/>
</dbReference>
<dbReference type="SUPFAM" id="SSF46458">
    <property type="entry name" value="Globin-like"/>
    <property type="match status" value="1"/>
</dbReference>
<dbReference type="PROSITE" id="PS51445">
    <property type="entry name" value="PBS_LINKER"/>
    <property type="match status" value="3"/>
</dbReference>
<feature type="chain" id="PRO_0000199262" description="Phycobiliprotein ApcE">
    <location>
        <begin position="1"/>
        <end position="886"/>
    </location>
</feature>
<feature type="domain" description="PBS-linker 1" evidence="3">
    <location>
        <begin position="244"/>
        <end position="424"/>
    </location>
</feature>
<feature type="domain" description="PBS-linker 2" evidence="3">
    <location>
        <begin position="496"/>
        <end position="678"/>
    </location>
</feature>
<feature type="domain" description="PBS-linker 3" evidence="3">
    <location>
        <begin position="695"/>
        <end position="876"/>
    </location>
</feature>
<feature type="binding site" description="covalent" evidence="2">
    <location>
        <position position="187"/>
    </location>
    <ligand>
        <name>(2R,3E)-phycocyanobilin</name>
        <dbReference type="ChEBI" id="CHEBI:85275"/>
    </ligand>
</feature>
<protein>
    <recommendedName>
        <fullName>Phycobiliprotein ApcE</fullName>
        <ecNumber>4.-.-.-</ecNumber>
    </recommendedName>
    <alternativeName>
        <fullName>Anchor polypeptide</fullName>
    </alternativeName>
    <alternativeName>
        <fullName>PBS-anchor protein</fullName>
    </alternativeName>
    <alternativeName>
        <fullName>Phycobilisome linker polypeptide</fullName>
    </alternativeName>
</protein>
<sequence>MSIKASGGSPLARPQLYRTASILTITQAEQQDRFLQLGELNQLVSFLNSGQKRLEVADILTKNANILVARAADKIFVGGSAISYLERPQAAVIIAGDQSSRDKINELSGNIQGDFGQSFRSLFNAGGATPPGFKPINVLRYGTTRMRKSLRDLDWFLRYLTYAIVSGDPNILSVNIRGLRELIDNACSSAAAIVALREMRRTALAIFEEDIKGQDLVREYFNVVISEFEAPSLTDKLRKRESTDLQGLRLPQTYSQAGVSTPRFVMKSSLSADEKNTVVKACYRQIFERDIAKTYDLSLSNLESQVKNGQISIKEFIRSLGTSNIYRKQFYEPFVNSRALELAFRHFLGRGPSSLEEFQKYFAILSATGLSGLVNAILNSAEYADYFGEETVPYFRKLGEEPQECRNWGPQIDLLNYSAPFRKVPQFITLFSDYKQSLPDQHPYGTGNDPLSIQFGAIFPKENKDPRKRQAIFGKDTRRILVRRGPGIYNQISNPQVRPKSAGSLGPKIFKLSNTLVATNSSANFENSVDVIAKVSYLRVFGREVYQEEKLLLRPIESQLQDGQISVREFIRQLAKSSIFRSLYWEPLYICKAIEYIHNRLLGRPTYGRQEINKYFDIAYKEGYYQVVDAIIDSPEYIETFGENVVPYERYTTPAGIALRSLRPGIIDQRFKKVISSKSSRFVELGKVKEIRSSNDIQSRIAQGVTALRDQSVIFDVNQNSSQEVLEQALRAAYRQIFERDLNSFSIGGEFLDIESSFLNKQINVKELIQKLALSELYGKEFYQPYPNTKVIELGTKHILGRAPNNQAEIRFLNQILASKGLSTFVETLVNSSEYDSVYGTNTVPYRRFPTLPAANFPNTETLYNRLTKQNVSVVVPSFKKVLGNQ</sequence>
<accession>P51263</accession>
<evidence type="ECO:0000250" key="1"/>
<evidence type="ECO:0000255" key="2"/>
<evidence type="ECO:0000255" key="3">
    <source>
        <dbReference type="PROSITE-ProRule" id="PRU00775"/>
    </source>
</evidence>
<evidence type="ECO:0000305" key="4"/>
<organism>
    <name type="scientific">Porphyra purpurea</name>
    <name type="common">Red seaweed</name>
    <name type="synonym">Ulva purpurea</name>
    <dbReference type="NCBI Taxonomy" id="2787"/>
    <lineage>
        <taxon>Eukaryota</taxon>
        <taxon>Rhodophyta</taxon>
        <taxon>Bangiophyceae</taxon>
        <taxon>Bangiales</taxon>
        <taxon>Bangiaceae</taxon>
        <taxon>Porphyra</taxon>
    </lineage>
</organism>
<comment type="function">
    <text evidence="1">This protein is postulated to act both as terminal energy acceptor and as a linker polypeptide that stabilizes the phycobilisome architecture. May have intrinsic bilin lyase activity (By similarity).</text>
</comment>
<comment type="subcellular location">
    <subcellularLocation>
        <location evidence="1">Plastid</location>
        <location evidence="1">Chloroplast thylakoid membrane</location>
        <topology evidence="1">Peripheral membrane protein</topology>
        <orientation evidence="1">Stromal side</orientation>
    </subcellularLocation>
</comment>
<comment type="PTM">
    <text evidence="4">Contains one covalently linked bilin chromophore. This protein autochromophorylates (Potential).</text>
</comment>
<comment type="similarity">
    <text evidence="3">Belongs to the phycobilisome linker protein family.</text>
</comment>
<proteinExistence type="inferred from homology"/>